<organism>
    <name type="scientific">Streptomyces lividans</name>
    <dbReference type="NCBI Taxonomy" id="1916"/>
    <lineage>
        <taxon>Bacteria</taxon>
        <taxon>Bacillati</taxon>
        <taxon>Actinomycetota</taxon>
        <taxon>Actinomycetes</taxon>
        <taxon>Kitasatosporales</taxon>
        <taxon>Streptomycetaceae</taxon>
        <taxon>Streptomyces</taxon>
    </lineage>
</organism>
<comment type="function">
    <text evidence="1">F(1)F(0) ATP synthase produces ATP from ADP in the presence of a proton or sodium gradient. F-type ATPases consist of two structural domains, F(1) containing the extramembraneous catalytic core and F(0) containing the membrane proton channel, linked together by a central stalk and a peripheral stalk. During catalysis, ATP synthesis in the catalytic domain of F(1) is coupled via a rotary mechanism of the central stalk subunits to proton translocation.</text>
</comment>
<comment type="function">
    <text evidence="1">This protein is part of the stalk that links CF(0) to CF(1). It either transmits conformational changes from CF(0) to CF(1) or is implicated in proton conduction.</text>
</comment>
<comment type="subunit">
    <text evidence="1">F-type ATPases have 2 components, F(1) - the catalytic core - and F(0) - the membrane proton channel. F(1) has five subunits: alpha(3), beta(3), gamma(1), delta(1), epsilon(1). F(0) has three main subunits: a(1), b(2) and c(10-14). The alpha and beta chains form an alternating ring which encloses part of the gamma chain. F(1) is attached to F(0) by a central stalk formed by the gamma and epsilon chains, while a peripheral stalk is formed by the delta and b chains.</text>
</comment>
<comment type="subcellular location">
    <subcellularLocation>
        <location evidence="1">Cell membrane</location>
        <topology evidence="1">Peripheral membrane protein</topology>
    </subcellularLocation>
</comment>
<comment type="similarity">
    <text evidence="1">Belongs to the ATPase delta chain family.</text>
</comment>
<name>ATPD_STRLI</name>
<protein>
    <recommendedName>
        <fullName evidence="1">ATP synthase subunit delta</fullName>
    </recommendedName>
    <alternativeName>
        <fullName evidence="1">ATP synthase F(1) sector subunit delta</fullName>
    </alternativeName>
    <alternativeName>
        <fullName evidence="1">F-type ATPase subunit delta</fullName>
        <shortName evidence="1">F-ATPase subunit delta</shortName>
    </alternativeName>
</protein>
<sequence length="273" mass="29061">MSGMHGASREALAAARERLDALTDSTSVDAGSLADELAAVTALLHREVSLRRVLTDPAQSARPRPSSPSVSSAPRSAAPVDLVAGTVRSRWSQSRDLVDALEQLANIADLTAAQKRGRLDNVEDELFRFGRIISSNTELRAALTSRSATTAAKSELLAGLLGSRAERTTERLVTRLVTAPRGRSLESGLESLSKLAADRRDRMVAVVTSAVPLSDTQKQRLGAALAKVYGRPMHLNLDVDPEVLGGIRVQVGDEVINGSIADRLEDAGRRLAS</sequence>
<feature type="initiator methionine" description="Removed" evidence="3">
    <location>
        <position position="1"/>
    </location>
</feature>
<feature type="chain" id="PRO_0000193489" description="ATP synthase subunit delta">
    <location>
        <begin position="2"/>
        <end position="273"/>
    </location>
</feature>
<feature type="region of interest" description="Disordered" evidence="2">
    <location>
        <begin position="55"/>
        <end position="78"/>
    </location>
</feature>
<feature type="compositionally biased region" description="Low complexity" evidence="2">
    <location>
        <begin position="57"/>
        <end position="78"/>
    </location>
</feature>
<accession>P50008</accession>
<keyword id="KW-0066">ATP synthesis</keyword>
<keyword id="KW-1003">Cell membrane</keyword>
<keyword id="KW-0139">CF(1)</keyword>
<keyword id="KW-0903">Direct protein sequencing</keyword>
<keyword id="KW-0375">Hydrogen ion transport</keyword>
<keyword id="KW-0406">Ion transport</keyword>
<keyword id="KW-0472">Membrane</keyword>
<keyword id="KW-0813">Transport</keyword>
<dbReference type="EMBL" id="Z22606">
    <property type="protein sequence ID" value="CAA80324.1"/>
    <property type="molecule type" value="Genomic_DNA"/>
</dbReference>
<dbReference type="PIR" id="S37544">
    <property type="entry name" value="S37544"/>
</dbReference>
<dbReference type="SMR" id="P50008"/>
<dbReference type="GO" id="GO:0005886">
    <property type="term" value="C:plasma membrane"/>
    <property type="evidence" value="ECO:0007669"/>
    <property type="project" value="UniProtKB-SubCell"/>
</dbReference>
<dbReference type="GO" id="GO:0045259">
    <property type="term" value="C:proton-transporting ATP synthase complex"/>
    <property type="evidence" value="ECO:0007669"/>
    <property type="project" value="UniProtKB-KW"/>
</dbReference>
<dbReference type="GO" id="GO:0046933">
    <property type="term" value="F:proton-transporting ATP synthase activity, rotational mechanism"/>
    <property type="evidence" value="ECO:0007669"/>
    <property type="project" value="UniProtKB-UniRule"/>
</dbReference>
<dbReference type="Gene3D" id="1.10.520.20">
    <property type="entry name" value="N-terminal domain of the delta subunit of the F1F0-ATP synthase"/>
    <property type="match status" value="1"/>
</dbReference>
<dbReference type="HAMAP" id="MF_01416">
    <property type="entry name" value="ATP_synth_delta_bact"/>
    <property type="match status" value="1"/>
</dbReference>
<dbReference type="InterPro" id="IPR026015">
    <property type="entry name" value="ATP_synth_OSCP/delta_N_sf"/>
</dbReference>
<dbReference type="InterPro" id="IPR020781">
    <property type="entry name" value="ATPase_OSCP/d_CS"/>
</dbReference>
<dbReference type="InterPro" id="IPR000711">
    <property type="entry name" value="ATPase_OSCP/dsu"/>
</dbReference>
<dbReference type="NCBIfam" id="TIGR01145">
    <property type="entry name" value="ATP_synt_delta"/>
    <property type="match status" value="1"/>
</dbReference>
<dbReference type="NCBIfam" id="NF009967">
    <property type="entry name" value="PRK13430.1"/>
    <property type="match status" value="1"/>
</dbReference>
<dbReference type="PANTHER" id="PTHR11910">
    <property type="entry name" value="ATP SYNTHASE DELTA CHAIN"/>
    <property type="match status" value="1"/>
</dbReference>
<dbReference type="Pfam" id="PF00213">
    <property type="entry name" value="OSCP"/>
    <property type="match status" value="1"/>
</dbReference>
<dbReference type="PRINTS" id="PR00125">
    <property type="entry name" value="ATPASEDELTA"/>
</dbReference>
<dbReference type="PROSITE" id="PS00389">
    <property type="entry name" value="ATPASE_DELTA"/>
    <property type="match status" value="1"/>
</dbReference>
<evidence type="ECO:0000255" key="1">
    <source>
        <dbReference type="HAMAP-Rule" id="MF_01416"/>
    </source>
</evidence>
<evidence type="ECO:0000256" key="2">
    <source>
        <dbReference type="SAM" id="MobiDB-lite"/>
    </source>
</evidence>
<evidence type="ECO:0000269" key="3">
    <source>
    </source>
</evidence>
<proteinExistence type="evidence at protein level"/>
<gene>
    <name evidence="1" type="primary">atpH</name>
</gene>
<reference key="1">
    <citation type="journal article" date="1995" name="Gene">
        <title>The ATP synthase (F1F0) of Streptomyces lividans: sequencing of the atp operon and phylogenetic considerations with subunit beta.</title>
        <authorList>
            <person name="Hensel M."/>
            <person name="Lill H."/>
            <person name="Schmid R."/>
            <person name="Deckers-Hebestreit G."/>
            <person name="Altendorf K."/>
        </authorList>
    </citation>
    <scope>NUCLEOTIDE SEQUENCE [GENOMIC DNA]</scope>
    <scope>PROTEIN SEQUENCE OF 2-21</scope>
    <source>
        <strain>66 / 1326</strain>
    </source>
</reference>